<comment type="function">
    <text evidence="1">May assemble to form large pore channels with gating and ion conductance likely regulated by membrane lipids.</text>
</comment>
<comment type="subunit">
    <text evidence="1">Oligomerizes to form undecameric cone-shaped channels.</text>
</comment>
<comment type="subcellular location">
    <subcellularLocation>
        <location evidence="3">Membrane</location>
        <topology evidence="2">Multi-pass membrane protein</topology>
    </subcellularLocation>
</comment>
<comment type="similarity">
    <text evidence="3">Belongs to the CALHM family.</text>
</comment>
<comment type="sequence caution" evidence="3">
    <conflict type="frameshift">
        <sequence resource="EMBL-CDS" id="BAC39570"/>
    </conflict>
</comment>
<gene>
    <name evidence="4" type="primary">Calhm5</name>
    <name type="synonym">Fam26e</name>
</gene>
<keyword id="KW-1015">Disulfide bond</keyword>
<keyword id="KW-0407">Ion channel</keyword>
<keyword id="KW-0406">Ion transport</keyword>
<keyword id="KW-0472">Membrane</keyword>
<keyword id="KW-1185">Reference proteome</keyword>
<keyword id="KW-0812">Transmembrane</keyword>
<keyword id="KW-1133">Transmembrane helix</keyword>
<keyword id="KW-0813">Transport</keyword>
<feature type="chain" id="PRO_0000186727" description="Calcium homeostasis modulator protein 5">
    <location>
        <begin position="1"/>
        <end position="309"/>
    </location>
</feature>
<feature type="topological domain" description="Cytoplasmic" evidence="3">
    <location>
        <begin position="1"/>
        <end position="15"/>
    </location>
</feature>
<feature type="transmembrane region" description="Helical; Name=S1" evidence="1">
    <location>
        <begin position="16"/>
        <end position="37"/>
    </location>
</feature>
<feature type="topological domain" description="Extracellular" evidence="3">
    <location>
        <begin position="38"/>
        <end position="45"/>
    </location>
</feature>
<feature type="transmembrane region" description="Helical; Name=S2" evidence="1">
    <location>
        <begin position="46"/>
        <end position="70"/>
    </location>
</feature>
<feature type="topological domain" description="Cytoplasmic" evidence="3">
    <location>
        <begin position="71"/>
        <end position="99"/>
    </location>
</feature>
<feature type="transmembrane region" description="Helical; Name=S3" evidence="1">
    <location>
        <begin position="100"/>
        <end position="129"/>
    </location>
</feature>
<feature type="topological domain" description="Extracellular" evidence="3">
    <location>
        <begin position="130"/>
        <end position="174"/>
    </location>
</feature>
<feature type="transmembrane region" description="Helical; Name=S4" evidence="1">
    <location>
        <begin position="175"/>
        <end position="200"/>
    </location>
</feature>
<feature type="topological domain" description="Cytoplasmic" evidence="3">
    <location>
        <begin position="201"/>
        <end position="309"/>
    </location>
</feature>
<feature type="binding site" evidence="1">
    <location>
        <position position="32"/>
    </location>
    <ligand>
        <name>a 1,2-diacyl-sn-glycero-3-phosphate</name>
        <dbReference type="ChEBI" id="CHEBI:58608"/>
    </ligand>
</feature>
<feature type="binding site" evidence="1">
    <location>
        <position position="37"/>
    </location>
    <ligand>
        <name>a 1,2-diacyl-sn-glycero-3-phosphate</name>
        <dbReference type="ChEBI" id="CHEBI:58608"/>
    </ligand>
</feature>
<feature type="binding site" evidence="1">
    <location>
        <position position="121"/>
    </location>
    <ligand>
        <name>a 1,2-diacyl-sn-glycero-3-phosphate</name>
        <dbReference type="ChEBI" id="CHEBI:58608"/>
    </ligand>
</feature>
<feature type="binding site" evidence="1">
    <location>
        <position position="202"/>
    </location>
    <ligand>
        <name>a 1,2-diacyl-sn-glycero-3-phosphate</name>
        <dbReference type="ChEBI" id="CHEBI:58608"/>
    </ligand>
</feature>
<feature type="disulfide bond" evidence="1">
    <location>
        <begin position="41"/>
        <end position="127"/>
    </location>
</feature>
<feature type="disulfide bond" evidence="1">
    <location>
        <begin position="43"/>
        <end position="158"/>
    </location>
</feature>
<feature type="disulfide bond" evidence="1">
    <location>
        <begin position="142"/>
        <end position="149"/>
    </location>
</feature>
<protein>
    <recommendedName>
        <fullName>Calcium homeostasis modulator protein 5</fullName>
    </recommendedName>
    <alternativeName>
        <fullName>Protein FAM26E</fullName>
    </alternativeName>
</protein>
<organism>
    <name type="scientific">Mus musculus</name>
    <name type="common">Mouse</name>
    <dbReference type="NCBI Taxonomy" id="10090"/>
    <lineage>
        <taxon>Eukaryota</taxon>
        <taxon>Metazoa</taxon>
        <taxon>Chordata</taxon>
        <taxon>Craniata</taxon>
        <taxon>Vertebrata</taxon>
        <taxon>Euteleostomi</taxon>
        <taxon>Mammalia</taxon>
        <taxon>Eutheria</taxon>
        <taxon>Euarchontoglires</taxon>
        <taxon>Glires</taxon>
        <taxon>Rodentia</taxon>
        <taxon>Myomorpha</taxon>
        <taxon>Muroidea</taxon>
        <taxon>Muridae</taxon>
        <taxon>Murinae</taxon>
        <taxon>Mus</taxon>
        <taxon>Mus</taxon>
    </lineage>
</organism>
<sequence length="309" mass="35285">MDAFQSILKFFLNQKTAIGYSFMALLTVGSERLFSLVAFKCPCSVENTAYGLVFLFAPAWVLLILGFFLNNKAWRLFTGCCMNPKKIFPRRRCCRFFYVLGHIILSSLVAPVMWLSVALLNGTFYECAMSGTRSTRLLEMICKGKPKECWEELHKVSCGKSSMAAMESEEVRLSLQAQSQILGWCLICSASFLSLLTTCYARCRSKVSYLQLSFWKTYAQREKEQLENKLLECANKLSERNLKCFFENKKPDPFPMPSFGAWEAASELHSFHQDREHYSTLHKVVDDGMEQTPQEEETTMILVGTAQSL</sequence>
<proteinExistence type="evidence at transcript level"/>
<accession>Q8R100</accession>
<accession>Q8C3G8</accession>
<reference key="1">
    <citation type="journal article" date="2005" name="Science">
        <title>The transcriptional landscape of the mammalian genome.</title>
        <authorList>
            <person name="Carninci P."/>
            <person name="Kasukawa T."/>
            <person name="Katayama S."/>
            <person name="Gough J."/>
            <person name="Frith M.C."/>
            <person name="Maeda N."/>
            <person name="Oyama R."/>
            <person name="Ravasi T."/>
            <person name="Lenhard B."/>
            <person name="Wells C."/>
            <person name="Kodzius R."/>
            <person name="Shimokawa K."/>
            <person name="Bajic V.B."/>
            <person name="Brenner S.E."/>
            <person name="Batalov S."/>
            <person name="Forrest A.R."/>
            <person name="Zavolan M."/>
            <person name="Davis M.J."/>
            <person name="Wilming L.G."/>
            <person name="Aidinis V."/>
            <person name="Allen J.E."/>
            <person name="Ambesi-Impiombato A."/>
            <person name="Apweiler R."/>
            <person name="Aturaliya R.N."/>
            <person name="Bailey T.L."/>
            <person name="Bansal M."/>
            <person name="Baxter L."/>
            <person name="Beisel K.W."/>
            <person name="Bersano T."/>
            <person name="Bono H."/>
            <person name="Chalk A.M."/>
            <person name="Chiu K.P."/>
            <person name="Choudhary V."/>
            <person name="Christoffels A."/>
            <person name="Clutterbuck D.R."/>
            <person name="Crowe M.L."/>
            <person name="Dalla E."/>
            <person name="Dalrymple B.P."/>
            <person name="de Bono B."/>
            <person name="Della Gatta G."/>
            <person name="di Bernardo D."/>
            <person name="Down T."/>
            <person name="Engstrom P."/>
            <person name="Fagiolini M."/>
            <person name="Faulkner G."/>
            <person name="Fletcher C.F."/>
            <person name="Fukushima T."/>
            <person name="Furuno M."/>
            <person name="Futaki S."/>
            <person name="Gariboldi M."/>
            <person name="Georgii-Hemming P."/>
            <person name="Gingeras T.R."/>
            <person name="Gojobori T."/>
            <person name="Green R.E."/>
            <person name="Gustincich S."/>
            <person name="Harbers M."/>
            <person name="Hayashi Y."/>
            <person name="Hensch T.K."/>
            <person name="Hirokawa N."/>
            <person name="Hill D."/>
            <person name="Huminiecki L."/>
            <person name="Iacono M."/>
            <person name="Ikeo K."/>
            <person name="Iwama A."/>
            <person name="Ishikawa T."/>
            <person name="Jakt M."/>
            <person name="Kanapin A."/>
            <person name="Katoh M."/>
            <person name="Kawasawa Y."/>
            <person name="Kelso J."/>
            <person name="Kitamura H."/>
            <person name="Kitano H."/>
            <person name="Kollias G."/>
            <person name="Krishnan S.P."/>
            <person name="Kruger A."/>
            <person name="Kummerfeld S.K."/>
            <person name="Kurochkin I.V."/>
            <person name="Lareau L.F."/>
            <person name="Lazarevic D."/>
            <person name="Lipovich L."/>
            <person name="Liu J."/>
            <person name="Liuni S."/>
            <person name="McWilliam S."/>
            <person name="Madan Babu M."/>
            <person name="Madera M."/>
            <person name="Marchionni L."/>
            <person name="Matsuda H."/>
            <person name="Matsuzawa S."/>
            <person name="Miki H."/>
            <person name="Mignone F."/>
            <person name="Miyake S."/>
            <person name="Morris K."/>
            <person name="Mottagui-Tabar S."/>
            <person name="Mulder N."/>
            <person name="Nakano N."/>
            <person name="Nakauchi H."/>
            <person name="Ng P."/>
            <person name="Nilsson R."/>
            <person name="Nishiguchi S."/>
            <person name="Nishikawa S."/>
            <person name="Nori F."/>
            <person name="Ohara O."/>
            <person name="Okazaki Y."/>
            <person name="Orlando V."/>
            <person name="Pang K.C."/>
            <person name="Pavan W.J."/>
            <person name="Pavesi G."/>
            <person name="Pesole G."/>
            <person name="Petrovsky N."/>
            <person name="Piazza S."/>
            <person name="Reed J."/>
            <person name="Reid J.F."/>
            <person name="Ring B.Z."/>
            <person name="Ringwald M."/>
            <person name="Rost B."/>
            <person name="Ruan Y."/>
            <person name="Salzberg S.L."/>
            <person name="Sandelin A."/>
            <person name="Schneider C."/>
            <person name="Schoenbach C."/>
            <person name="Sekiguchi K."/>
            <person name="Semple C.A."/>
            <person name="Seno S."/>
            <person name="Sessa L."/>
            <person name="Sheng Y."/>
            <person name="Shibata Y."/>
            <person name="Shimada H."/>
            <person name="Shimada K."/>
            <person name="Silva D."/>
            <person name="Sinclair B."/>
            <person name="Sperling S."/>
            <person name="Stupka E."/>
            <person name="Sugiura K."/>
            <person name="Sultana R."/>
            <person name="Takenaka Y."/>
            <person name="Taki K."/>
            <person name="Tammoja K."/>
            <person name="Tan S.L."/>
            <person name="Tang S."/>
            <person name="Taylor M.S."/>
            <person name="Tegner J."/>
            <person name="Teichmann S.A."/>
            <person name="Ueda H.R."/>
            <person name="van Nimwegen E."/>
            <person name="Verardo R."/>
            <person name="Wei C.L."/>
            <person name="Yagi K."/>
            <person name="Yamanishi H."/>
            <person name="Zabarovsky E."/>
            <person name="Zhu S."/>
            <person name="Zimmer A."/>
            <person name="Hide W."/>
            <person name="Bult C."/>
            <person name="Grimmond S.M."/>
            <person name="Teasdale R.D."/>
            <person name="Liu E.T."/>
            <person name="Brusic V."/>
            <person name="Quackenbush J."/>
            <person name="Wahlestedt C."/>
            <person name="Mattick J.S."/>
            <person name="Hume D.A."/>
            <person name="Kai C."/>
            <person name="Sasaki D."/>
            <person name="Tomaru Y."/>
            <person name="Fukuda S."/>
            <person name="Kanamori-Katayama M."/>
            <person name="Suzuki M."/>
            <person name="Aoki J."/>
            <person name="Arakawa T."/>
            <person name="Iida J."/>
            <person name="Imamura K."/>
            <person name="Itoh M."/>
            <person name="Kato T."/>
            <person name="Kawaji H."/>
            <person name="Kawagashira N."/>
            <person name="Kawashima T."/>
            <person name="Kojima M."/>
            <person name="Kondo S."/>
            <person name="Konno H."/>
            <person name="Nakano K."/>
            <person name="Ninomiya N."/>
            <person name="Nishio T."/>
            <person name="Okada M."/>
            <person name="Plessy C."/>
            <person name="Shibata K."/>
            <person name="Shiraki T."/>
            <person name="Suzuki S."/>
            <person name="Tagami M."/>
            <person name="Waki K."/>
            <person name="Watahiki A."/>
            <person name="Okamura-Oho Y."/>
            <person name="Suzuki H."/>
            <person name="Kawai J."/>
            <person name="Hayashizaki Y."/>
        </authorList>
    </citation>
    <scope>NUCLEOTIDE SEQUENCE [LARGE SCALE MRNA]</scope>
    <source>
        <strain>C57BL/6J</strain>
        <tissue>Colon</tissue>
    </source>
</reference>
<reference key="2">
    <citation type="journal article" date="2004" name="Genome Res.">
        <title>The status, quality, and expansion of the NIH full-length cDNA project: the Mammalian Gene Collection (MGC).</title>
        <authorList>
            <consortium name="The MGC Project Team"/>
        </authorList>
    </citation>
    <scope>NUCLEOTIDE SEQUENCE [LARGE SCALE MRNA]</scope>
    <source>
        <strain>FVB/N</strain>
        <tissue>Mammary tumor</tissue>
    </source>
</reference>
<evidence type="ECO:0000250" key="1">
    <source>
        <dbReference type="UniProtKB" id="Q8N5C1"/>
    </source>
</evidence>
<evidence type="ECO:0000255" key="2"/>
<evidence type="ECO:0000305" key="3"/>
<evidence type="ECO:0000312" key="4">
    <source>
        <dbReference type="MGI" id="MGI:2143897"/>
    </source>
</evidence>
<dbReference type="EMBL" id="AK078850">
    <property type="protein sequence ID" value="BAC37420.1"/>
    <property type="molecule type" value="mRNA"/>
</dbReference>
<dbReference type="EMBL" id="AK085925">
    <property type="protein sequence ID" value="BAC39570.1"/>
    <property type="status" value="ALT_FRAME"/>
    <property type="molecule type" value="mRNA"/>
</dbReference>
<dbReference type="EMBL" id="BC025893">
    <property type="protein sequence ID" value="AAH25893.1"/>
    <property type="molecule type" value="mRNA"/>
</dbReference>
<dbReference type="CCDS" id="CCDS35879.1"/>
<dbReference type="RefSeq" id="NP_849239.2">
    <property type="nucleotide sequence ID" value="NM_178908.3"/>
</dbReference>
<dbReference type="SMR" id="Q8R100"/>
<dbReference type="BioGRID" id="222101">
    <property type="interactions" value="4"/>
</dbReference>
<dbReference type="FunCoup" id="Q8R100">
    <property type="interactions" value="20"/>
</dbReference>
<dbReference type="STRING" id="10090.ENSMUSP00000064462"/>
<dbReference type="iPTMnet" id="Q8R100"/>
<dbReference type="PhosphoSitePlus" id="Q8R100"/>
<dbReference type="PaxDb" id="10090-ENSMUSP00000064462"/>
<dbReference type="ProteomicsDB" id="273903"/>
<dbReference type="Pumba" id="Q8R100"/>
<dbReference type="Antibodypedia" id="51121">
    <property type="antibodies" value="70 antibodies from 12 providers"/>
</dbReference>
<dbReference type="DNASU" id="103511"/>
<dbReference type="Ensembl" id="ENSMUST00000069125.8">
    <property type="protein sequence ID" value="ENSMUSP00000064462.7"/>
    <property type="gene ID" value="ENSMUSG00000049872.9"/>
</dbReference>
<dbReference type="GeneID" id="103511"/>
<dbReference type="KEGG" id="mmu:103511"/>
<dbReference type="UCSC" id="uc007euq.1">
    <property type="organism name" value="mouse"/>
</dbReference>
<dbReference type="AGR" id="MGI:2143897"/>
<dbReference type="CTD" id="254228"/>
<dbReference type="MGI" id="MGI:2143897">
    <property type="gene designation" value="Calhm5"/>
</dbReference>
<dbReference type="VEuPathDB" id="HostDB:ENSMUSG00000049872"/>
<dbReference type="eggNOG" id="ENOG502QPKW">
    <property type="taxonomic scope" value="Eukaryota"/>
</dbReference>
<dbReference type="GeneTree" id="ENSGT01030000234610"/>
<dbReference type="HOGENOM" id="CLU_069286_2_0_1"/>
<dbReference type="InParanoid" id="Q8R100"/>
<dbReference type="OMA" id="HYSTIHR"/>
<dbReference type="OrthoDB" id="5953668at2759"/>
<dbReference type="PhylomeDB" id="Q8R100"/>
<dbReference type="TreeFam" id="TF329085"/>
<dbReference type="BioGRID-ORCS" id="103511">
    <property type="hits" value="0 hits in 77 CRISPR screens"/>
</dbReference>
<dbReference type="PRO" id="PR:Q8R100"/>
<dbReference type="Proteomes" id="UP000000589">
    <property type="component" value="Chromosome 10"/>
</dbReference>
<dbReference type="RNAct" id="Q8R100">
    <property type="molecule type" value="protein"/>
</dbReference>
<dbReference type="Bgee" id="ENSMUSG00000049872">
    <property type="expression patterns" value="Expressed in lumbar dorsal root ganglion and 96 other cell types or tissues"/>
</dbReference>
<dbReference type="GO" id="GO:0016020">
    <property type="term" value="C:membrane"/>
    <property type="evidence" value="ECO:0007669"/>
    <property type="project" value="UniProtKB-SubCell"/>
</dbReference>
<dbReference type="GO" id="GO:1904669">
    <property type="term" value="P:ATP export"/>
    <property type="evidence" value="ECO:0007669"/>
    <property type="project" value="UniProtKB-ARBA"/>
</dbReference>
<dbReference type="GO" id="GO:0034220">
    <property type="term" value="P:monoatomic ion transmembrane transport"/>
    <property type="evidence" value="ECO:0007669"/>
    <property type="project" value="UniProtKB-KW"/>
</dbReference>
<dbReference type="InterPro" id="IPR029569">
    <property type="entry name" value="CALHM"/>
</dbReference>
<dbReference type="PANTHER" id="PTHR32261">
    <property type="entry name" value="CALCIUM HOMEOSTASIS MODULATOR PROTEIN"/>
    <property type="match status" value="1"/>
</dbReference>
<dbReference type="PANTHER" id="PTHR32261:SF8">
    <property type="entry name" value="CALCIUM HOMEOSTASIS MODULATOR PROTEIN 5"/>
    <property type="match status" value="1"/>
</dbReference>
<dbReference type="Pfam" id="PF14798">
    <property type="entry name" value="Ca_hom_mod"/>
    <property type="match status" value="1"/>
</dbReference>
<name>CAHM5_MOUSE</name>